<reference key="1">
    <citation type="journal article" date="2004" name="Nucleic Acids Res.">
        <title>Whole genome comparisons of serotype 4b and 1/2a strains of the food-borne pathogen Listeria monocytogenes reveal new insights into the core genome components of this species.</title>
        <authorList>
            <person name="Nelson K.E."/>
            <person name="Fouts D.E."/>
            <person name="Mongodin E.F."/>
            <person name="Ravel J."/>
            <person name="DeBoy R.T."/>
            <person name="Kolonay J.F."/>
            <person name="Rasko D.A."/>
            <person name="Angiuoli S.V."/>
            <person name="Gill S.R."/>
            <person name="Paulsen I.T."/>
            <person name="Peterson J.D."/>
            <person name="White O."/>
            <person name="Nelson W.C."/>
            <person name="Nierman W.C."/>
            <person name="Beanan M.J."/>
            <person name="Brinkac L.M."/>
            <person name="Daugherty S.C."/>
            <person name="Dodson R.J."/>
            <person name="Durkin A.S."/>
            <person name="Madupu R."/>
            <person name="Haft D.H."/>
            <person name="Selengut J."/>
            <person name="Van Aken S.E."/>
            <person name="Khouri H.M."/>
            <person name="Fedorova N."/>
            <person name="Forberger H.A."/>
            <person name="Tran B."/>
            <person name="Kathariou S."/>
            <person name="Wonderling L.D."/>
            <person name="Uhlich G.A."/>
            <person name="Bayles D.O."/>
            <person name="Luchansky J.B."/>
            <person name="Fraser C.M."/>
        </authorList>
    </citation>
    <scope>NUCLEOTIDE SEQUENCE [LARGE SCALE GENOMIC DNA]</scope>
    <source>
        <strain>F2365</strain>
    </source>
</reference>
<feature type="chain" id="PRO_0000136367" description="Phosphoribosyl-ATP pyrophosphatase">
    <location>
        <begin position="1"/>
        <end position="103"/>
    </location>
</feature>
<name>HIS2_LISMF</name>
<organism>
    <name type="scientific">Listeria monocytogenes serotype 4b (strain F2365)</name>
    <dbReference type="NCBI Taxonomy" id="265669"/>
    <lineage>
        <taxon>Bacteria</taxon>
        <taxon>Bacillati</taxon>
        <taxon>Bacillota</taxon>
        <taxon>Bacilli</taxon>
        <taxon>Bacillales</taxon>
        <taxon>Listeriaceae</taxon>
        <taxon>Listeria</taxon>
    </lineage>
</organism>
<keyword id="KW-0028">Amino-acid biosynthesis</keyword>
<keyword id="KW-0067">ATP-binding</keyword>
<keyword id="KW-0963">Cytoplasm</keyword>
<keyword id="KW-0368">Histidine biosynthesis</keyword>
<keyword id="KW-0378">Hydrolase</keyword>
<keyword id="KW-0547">Nucleotide-binding</keyword>
<protein>
    <recommendedName>
        <fullName evidence="1">Phosphoribosyl-ATP pyrophosphatase</fullName>
        <shortName evidence="1">PRA-PH</shortName>
        <ecNumber evidence="1">3.6.1.31</ecNumber>
    </recommendedName>
</protein>
<dbReference type="EC" id="3.6.1.31" evidence="1"/>
<dbReference type="EMBL" id="AE017262">
    <property type="protein sequence ID" value="AAT03372.1"/>
    <property type="molecule type" value="Genomic_DNA"/>
</dbReference>
<dbReference type="RefSeq" id="WP_003725463.1">
    <property type="nucleotide sequence ID" value="NC_002973.6"/>
</dbReference>
<dbReference type="SMR" id="Q722Y9"/>
<dbReference type="DNASU" id="2799199"/>
<dbReference type="KEGG" id="lmf:LMOf2365_0590"/>
<dbReference type="HOGENOM" id="CLU_123337_0_0_9"/>
<dbReference type="UniPathway" id="UPA00031">
    <property type="reaction ID" value="UER00007"/>
</dbReference>
<dbReference type="GO" id="GO:0005737">
    <property type="term" value="C:cytoplasm"/>
    <property type="evidence" value="ECO:0007669"/>
    <property type="project" value="UniProtKB-SubCell"/>
</dbReference>
<dbReference type="GO" id="GO:0005524">
    <property type="term" value="F:ATP binding"/>
    <property type="evidence" value="ECO:0007669"/>
    <property type="project" value="UniProtKB-KW"/>
</dbReference>
<dbReference type="GO" id="GO:0004636">
    <property type="term" value="F:phosphoribosyl-ATP diphosphatase activity"/>
    <property type="evidence" value="ECO:0007669"/>
    <property type="project" value="UniProtKB-UniRule"/>
</dbReference>
<dbReference type="GO" id="GO:0000105">
    <property type="term" value="P:L-histidine biosynthetic process"/>
    <property type="evidence" value="ECO:0007669"/>
    <property type="project" value="UniProtKB-UniRule"/>
</dbReference>
<dbReference type="CDD" id="cd11534">
    <property type="entry name" value="NTP-PPase_HisIE_like"/>
    <property type="match status" value="1"/>
</dbReference>
<dbReference type="Gene3D" id="1.10.287.1080">
    <property type="entry name" value="MazG-like"/>
    <property type="match status" value="1"/>
</dbReference>
<dbReference type="HAMAP" id="MF_01020">
    <property type="entry name" value="HisE"/>
    <property type="match status" value="1"/>
</dbReference>
<dbReference type="InterPro" id="IPR008179">
    <property type="entry name" value="HisE"/>
</dbReference>
<dbReference type="InterPro" id="IPR021130">
    <property type="entry name" value="PRib-ATP_PPHydrolase-like"/>
</dbReference>
<dbReference type="NCBIfam" id="TIGR03188">
    <property type="entry name" value="histidine_hisI"/>
    <property type="match status" value="1"/>
</dbReference>
<dbReference type="PANTHER" id="PTHR42945">
    <property type="entry name" value="HISTIDINE BIOSYNTHESIS BIFUNCTIONAL PROTEIN"/>
    <property type="match status" value="1"/>
</dbReference>
<dbReference type="PANTHER" id="PTHR42945:SF9">
    <property type="entry name" value="HISTIDINE BIOSYNTHESIS BIFUNCTIONAL PROTEIN HISIE"/>
    <property type="match status" value="1"/>
</dbReference>
<dbReference type="Pfam" id="PF01503">
    <property type="entry name" value="PRA-PH"/>
    <property type="match status" value="1"/>
</dbReference>
<dbReference type="SUPFAM" id="SSF101386">
    <property type="entry name" value="all-alpha NTP pyrophosphatases"/>
    <property type="match status" value="1"/>
</dbReference>
<accession>Q722Y9</accession>
<gene>
    <name evidence="1" type="primary">hisE</name>
    <name type="ordered locus">LMOf2365_0590</name>
</gene>
<sequence length="103" mass="11860">MLNDLYEEIKLRKTQPREGSYTNYLFDKGLDKILKKVGEEATEVVIAAKNNEQELIAEVSDLTYHLLVLLAEQNIPLSKIQAELQNREGKLSTTRDRKEINDL</sequence>
<proteinExistence type="inferred from homology"/>
<comment type="catalytic activity">
    <reaction evidence="1">
        <text>1-(5-phospho-beta-D-ribosyl)-ATP + H2O = 1-(5-phospho-beta-D-ribosyl)-5'-AMP + diphosphate + H(+)</text>
        <dbReference type="Rhea" id="RHEA:22828"/>
        <dbReference type="ChEBI" id="CHEBI:15377"/>
        <dbReference type="ChEBI" id="CHEBI:15378"/>
        <dbReference type="ChEBI" id="CHEBI:33019"/>
        <dbReference type="ChEBI" id="CHEBI:59457"/>
        <dbReference type="ChEBI" id="CHEBI:73183"/>
        <dbReference type="EC" id="3.6.1.31"/>
    </reaction>
</comment>
<comment type="pathway">
    <text evidence="1">Amino-acid biosynthesis; L-histidine biosynthesis; L-histidine from 5-phospho-alpha-D-ribose 1-diphosphate: step 2/9.</text>
</comment>
<comment type="subcellular location">
    <subcellularLocation>
        <location evidence="1">Cytoplasm</location>
    </subcellularLocation>
</comment>
<comment type="similarity">
    <text evidence="1">Belongs to the PRA-PH family.</text>
</comment>
<evidence type="ECO:0000255" key="1">
    <source>
        <dbReference type="HAMAP-Rule" id="MF_01020"/>
    </source>
</evidence>